<evidence type="ECO:0000255" key="1"/>
<evidence type="ECO:0000269" key="2">
    <source>
    </source>
</evidence>
<evidence type="ECO:0000305" key="3"/>
<evidence type="ECO:0000312" key="4">
    <source>
        <dbReference type="HGNC" id="HGNC:26480"/>
    </source>
</evidence>
<sequence>MDELALSFSLTCLLPENRASLSPSQPLSFQCLKAPATLTWEDEKQQRWGQPHGPVSSPLLGDHRCLVPFRDLNPSSEVNTANLLESPSSLLLTSCYICSYFSFYILGEKRCHSLKRLRYSVCCKVCPNFCACGKENVSGTGQVCTGVHVGAKEQEEPGGTQALRSCGIYCLEERTDKASHEECRERSTLGRPQCTGLTPSLAGESPCPRLLPGSPTVRHLIASSCPGLSDPLPLPPGTLPLGS</sequence>
<feature type="signal peptide" evidence="1">
    <location>
        <begin position="1"/>
        <end position="19"/>
    </location>
</feature>
<feature type="chain" id="PRO_0000264239" description="Uncharacterized protein CD300LD-AS1">
    <location>
        <begin position="20"/>
        <end position="243"/>
    </location>
</feature>
<feature type="glycosylation site" description="N-linked (GlcNAc...) asparagine" evidence="1">
    <location>
        <position position="136"/>
    </location>
</feature>
<feature type="sequence variant" id="VAR_029628" description="In dbSNP:rs493430." evidence="2">
    <original>R</original>
    <variation>S</variation>
    <location>
        <position position="47"/>
    </location>
</feature>
<feature type="sequence conflict" description="In Ref. 1; AK056444." evidence="3" ref="1">
    <original>S</original>
    <variation>T</variation>
    <location>
        <position position="57"/>
    </location>
</feature>
<dbReference type="EMBL" id="AK056444">
    <property type="status" value="NOT_ANNOTATED_CDS"/>
    <property type="molecule type" value="mRNA"/>
</dbReference>
<dbReference type="EMBL" id="AC079325">
    <property type="status" value="NOT_ANNOTATED_CDS"/>
    <property type="molecule type" value="Genomic_DNA"/>
</dbReference>
<dbReference type="RefSeq" id="NP_001289738.1">
    <property type="nucleotide sequence ID" value="NM_001302809.1"/>
</dbReference>
<dbReference type="RefSeq" id="NP_689673.2">
    <property type="nucleotide sequence ID" value="NM_152460.2"/>
</dbReference>
<dbReference type="BioGRID" id="127006">
    <property type="interactions" value="3"/>
</dbReference>
<dbReference type="IntAct" id="Q96MU5">
    <property type="interactions" value="1"/>
</dbReference>
<dbReference type="GlyCosmos" id="Q96MU5">
    <property type="glycosylation" value="1 site, No reported glycans"/>
</dbReference>
<dbReference type="GlyGen" id="Q96MU5">
    <property type="glycosylation" value="1 site"/>
</dbReference>
<dbReference type="iPTMnet" id="Q96MU5"/>
<dbReference type="PhosphoSitePlus" id="Q96MU5"/>
<dbReference type="BioMuta" id="HGNC:26480"/>
<dbReference type="DMDM" id="313104095"/>
<dbReference type="PaxDb" id="9606-ENSP00000329353"/>
<dbReference type="ProteomicsDB" id="77410"/>
<dbReference type="DNASU" id="146723"/>
<dbReference type="AGR" id="HGNC:26480"/>
<dbReference type="GeneCards" id="CD300LD-AS1"/>
<dbReference type="HGNC" id="HGNC:26480">
    <property type="gene designation" value="CD300LD-AS1"/>
</dbReference>
<dbReference type="neXtProt" id="NX_Q96MU5"/>
<dbReference type="eggNOG" id="ENOG502TFID">
    <property type="taxonomic scope" value="Eukaryota"/>
</dbReference>
<dbReference type="InParanoid" id="Q96MU5"/>
<dbReference type="PAN-GO" id="Q96MU5">
    <property type="GO annotations" value="0 GO annotations based on evolutionary models"/>
</dbReference>
<dbReference type="PhylomeDB" id="Q96MU5"/>
<dbReference type="TreeFam" id="TF342090"/>
<dbReference type="PathwayCommons" id="Q96MU5"/>
<dbReference type="SignaLink" id="Q96MU5"/>
<dbReference type="BioGRID-ORCS" id="146723">
    <property type="hits" value="11 hits in 1112 CRISPR screens"/>
</dbReference>
<dbReference type="ChiTaRS" id="C17orf77">
    <property type="organism name" value="human"/>
</dbReference>
<dbReference type="GenomeRNAi" id="146723"/>
<dbReference type="Pharos" id="Q96MU5">
    <property type="development level" value="Tdark"/>
</dbReference>
<dbReference type="PRO" id="PR:Q96MU5"/>
<dbReference type="Proteomes" id="UP000005640">
    <property type="component" value="Unplaced"/>
</dbReference>
<dbReference type="RNAct" id="Q96MU5">
    <property type="molecule type" value="protein"/>
</dbReference>
<dbReference type="GO" id="GO:0005576">
    <property type="term" value="C:extracellular region"/>
    <property type="evidence" value="ECO:0007669"/>
    <property type="project" value="UniProtKB-SubCell"/>
</dbReference>
<comment type="subcellular location">
    <subcellularLocation>
        <location evidence="3">Secreted</location>
    </subcellularLocation>
</comment>
<comment type="sequence caution" evidence="3">
    <conflict type="erroneous termination">
        <sequence resource="EMBL" id="AK056444"/>
    </conflict>
    <text>Truncated C-terminus.</text>
</comment>
<proteinExistence type="evidence at transcript level"/>
<accession>Q96MU5</accession>
<gene>
    <name evidence="4" type="primary">CD300LD-AS1</name>
    <name type="synonym">C17orf77</name>
</gene>
<keyword id="KW-0325">Glycoprotein</keyword>
<keyword id="KW-1185">Reference proteome</keyword>
<keyword id="KW-0964">Secreted</keyword>
<keyword id="KW-0732">Signal</keyword>
<protein>
    <recommendedName>
        <fullName evidence="4">Uncharacterized protein CD300LD-AS1</fullName>
    </recommendedName>
    <alternativeName>
        <fullName>CD300LD antisense RNA 1</fullName>
    </alternativeName>
</protein>
<organism>
    <name type="scientific">Homo sapiens</name>
    <name type="common">Human</name>
    <dbReference type="NCBI Taxonomy" id="9606"/>
    <lineage>
        <taxon>Eukaryota</taxon>
        <taxon>Metazoa</taxon>
        <taxon>Chordata</taxon>
        <taxon>Craniata</taxon>
        <taxon>Vertebrata</taxon>
        <taxon>Euteleostomi</taxon>
        <taxon>Mammalia</taxon>
        <taxon>Eutheria</taxon>
        <taxon>Euarchontoglires</taxon>
        <taxon>Primates</taxon>
        <taxon>Haplorrhini</taxon>
        <taxon>Catarrhini</taxon>
        <taxon>Hominidae</taxon>
        <taxon>Homo</taxon>
    </lineage>
</organism>
<name>CQ077_HUMAN</name>
<reference key="1">
    <citation type="journal article" date="2004" name="Nat. Genet.">
        <title>Complete sequencing and characterization of 21,243 full-length human cDNAs.</title>
        <authorList>
            <person name="Ota T."/>
            <person name="Suzuki Y."/>
            <person name="Nishikawa T."/>
            <person name="Otsuki T."/>
            <person name="Sugiyama T."/>
            <person name="Irie R."/>
            <person name="Wakamatsu A."/>
            <person name="Hayashi K."/>
            <person name="Sato H."/>
            <person name="Nagai K."/>
            <person name="Kimura K."/>
            <person name="Makita H."/>
            <person name="Sekine M."/>
            <person name="Obayashi M."/>
            <person name="Nishi T."/>
            <person name="Shibahara T."/>
            <person name="Tanaka T."/>
            <person name="Ishii S."/>
            <person name="Yamamoto J."/>
            <person name="Saito K."/>
            <person name="Kawai Y."/>
            <person name="Isono Y."/>
            <person name="Nakamura Y."/>
            <person name="Nagahari K."/>
            <person name="Murakami K."/>
            <person name="Yasuda T."/>
            <person name="Iwayanagi T."/>
            <person name="Wagatsuma M."/>
            <person name="Shiratori A."/>
            <person name="Sudo H."/>
            <person name="Hosoiri T."/>
            <person name="Kaku Y."/>
            <person name="Kodaira H."/>
            <person name="Kondo H."/>
            <person name="Sugawara M."/>
            <person name="Takahashi M."/>
            <person name="Kanda K."/>
            <person name="Yokoi T."/>
            <person name="Furuya T."/>
            <person name="Kikkawa E."/>
            <person name="Omura Y."/>
            <person name="Abe K."/>
            <person name="Kamihara K."/>
            <person name="Katsuta N."/>
            <person name="Sato K."/>
            <person name="Tanikawa M."/>
            <person name="Yamazaki M."/>
            <person name="Ninomiya K."/>
            <person name="Ishibashi T."/>
            <person name="Yamashita H."/>
            <person name="Murakawa K."/>
            <person name="Fujimori K."/>
            <person name="Tanai H."/>
            <person name="Kimata M."/>
            <person name="Watanabe M."/>
            <person name="Hiraoka S."/>
            <person name="Chiba Y."/>
            <person name="Ishida S."/>
            <person name="Ono Y."/>
            <person name="Takiguchi S."/>
            <person name="Watanabe S."/>
            <person name="Yosida M."/>
            <person name="Hotuta T."/>
            <person name="Kusano J."/>
            <person name="Kanehori K."/>
            <person name="Takahashi-Fujii A."/>
            <person name="Hara H."/>
            <person name="Tanase T.-O."/>
            <person name="Nomura Y."/>
            <person name="Togiya S."/>
            <person name="Komai F."/>
            <person name="Hara R."/>
            <person name="Takeuchi K."/>
            <person name="Arita M."/>
            <person name="Imose N."/>
            <person name="Musashino K."/>
            <person name="Yuuki H."/>
            <person name="Oshima A."/>
            <person name="Sasaki N."/>
            <person name="Aotsuka S."/>
            <person name="Yoshikawa Y."/>
            <person name="Matsunawa H."/>
            <person name="Ichihara T."/>
            <person name="Shiohata N."/>
            <person name="Sano S."/>
            <person name="Moriya S."/>
            <person name="Momiyama H."/>
            <person name="Satoh N."/>
            <person name="Takami S."/>
            <person name="Terashima Y."/>
            <person name="Suzuki O."/>
            <person name="Nakagawa S."/>
            <person name="Senoh A."/>
            <person name="Mizoguchi H."/>
            <person name="Goto Y."/>
            <person name="Shimizu F."/>
            <person name="Wakebe H."/>
            <person name="Hishigaki H."/>
            <person name="Watanabe T."/>
            <person name="Sugiyama A."/>
            <person name="Takemoto M."/>
            <person name="Kawakami B."/>
            <person name="Yamazaki M."/>
            <person name="Watanabe K."/>
            <person name="Kumagai A."/>
            <person name="Itakura S."/>
            <person name="Fukuzumi Y."/>
            <person name="Fujimori Y."/>
            <person name="Komiyama M."/>
            <person name="Tashiro H."/>
            <person name="Tanigami A."/>
            <person name="Fujiwara T."/>
            <person name="Ono T."/>
            <person name="Yamada K."/>
            <person name="Fujii Y."/>
            <person name="Ozaki K."/>
            <person name="Hirao M."/>
            <person name="Ohmori Y."/>
            <person name="Kawabata A."/>
            <person name="Hikiji T."/>
            <person name="Kobatake N."/>
            <person name="Inagaki H."/>
            <person name="Ikema Y."/>
            <person name="Okamoto S."/>
            <person name="Okitani R."/>
            <person name="Kawakami T."/>
            <person name="Noguchi S."/>
            <person name="Itoh T."/>
            <person name="Shigeta K."/>
            <person name="Senba T."/>
            <person name="Matsumura K."/>
            <person name="Nakajima Y."/>
            <person name="Mizuno T."/>
            <person name="Morinaga M."/>
            <person name="Sasaki M."/>
            <person name="Togashi T."/>
            <person name="Oyama M."/>
            <person name="Hata H."/>
            <person name="Watanabe M."/>
            <person name="Komatsu T."/>
            <person name="Mizushima-Sugano J."/>
            <person name="Satoh T."/>
            <person name="Shirai Y."/>
            <person name="Takahashi Y."/>
            <person name="Nakagawa K."/>
            <person name="Okumura K."/>
            <person name="Nagase T."/>
            <person name="Nomura N."/>
            <person name="Kikuchi H."/>
            <person name="Masuho Y."/>
            <person name="Yamashita R."/>
            <person name="Nakai K."/>
            <person name="Yada T."/>
            <person name="Nakamura Y."/>
            <person name="Ohara O."/>
            <person name="Isogai T."/>
            <person name="Sugano S."/>
        </authorList>
    </citation>
    <scope>NUCLEOTIDE SEQUENCE [LARGE SCALE MRNA]</scope>
    <scope>VARIANT SER-47</scope>
</reference>
<reference key="2">
    <citation type="journal article" date="2006" name="Nature">
        <title>DNA sequence of human chromosome 17 and analysis of rearrangement in the human lineage.</title>
        <authorList>
            <person name="Zody M.C."/>
            <person name="Garber M."/>
            <person name="Adams D.J."/>
            <person name="Sharpe T."/>
            <person name="Harrow J."/>
            <person name="Lupski J.R."/>
            <person name="Nicholson C."/>
            <person name="Searle S.M."/>
            <person name="Wilming L."/>
            <person name="Young S.K."/>
            <person name="Abouelleil A."/>
            <person name="Allen N.R."/>
            <person name="Bi W."/>
            <person name="Bloom T."/>
            <person name="Borowsky M.L."/>
            <person name="Bugalter B.E."/>
            <person name="Butler J."/>
            <person name="Chang J.L."/>
            <person name="Chen C.-K."/>
            <person name="Cook A."/>
            <person name="Corum B."/>
            <person name="Cuomo C.A."/>
            <person name="de Jong P.J."/>
            <person name="DeCaprio D."/>
            <person name="Dewar K."/>
            <person name="FitzGerald M."/>
            <person name="Gilbert J."/>
            <person name="Gibson R."/>
            <person name="Gnerre S."/>
            <person name="Goldstein S."/>
            <person name="Grafham D.V."/>
            <person name="Grocock R."/>
            <person name="Hafez N."/>
            <person name="Hagopian D.S."/>
            <person name="Hart E."/>
            <person name="Norman C.H."/>
            <person name="Humphray S."/>
            <person name="Jaffe D.B."/>
            <person name="Jones M."/>
            <person name="Kamal M."/>
            <person name="Khodiyar V.K."/>
            <person name="LaButti K."/>
            <person name="Laird G."/>
            <person name="Lehoczky J."/>
            <person name="Liu X."/>
            <person name="Lokyitsang T."/>
            <person name="Loveland J."/>
            <person name="Lui A."/>
            <person name="Macdonald P."/>
            <person name="Major J.E."/>
            <person name="Matthews L."/>
            <person name="Mauceli E."/>
            <person name="McCarroll S.A."/>
            <person name="Mihalev A.H."/>
            <person name="Mudge J."/>
            <person name="Nguyen C."/>
            <person name="Nicol R."/>
            <person name="O'Leary S.B."/>
            <person name="Osoegawa K."/>
            <person name="Schwartz D.C."/>
            <person name="Shaw-Smith C."/>
            <person name="Stankiewicz P."/>
            <person name="Steward C."/>
            <person name="Swarbreck D."/>
            <person name="Venkataraman V."/>
            <person name="Whittaker C.A."/>
            <person name="Yang X."/>
            <person name="Zimmer A.R."/>
            <person name="Bradley A."/>
            <person name="Hubbard T."/>
            <person name="Birren B.W."/>
            <person name="Rogers J."/>
            <person name="Lander E.S."/>
            <person name="Nusbaum C."/>
        </authorList>
    </citation>
    <scope>NUCLEOTIDE SEQUENCE [LARGE SCALE GENOMIC DNA]</scope>
</reference>